<comment type="function">
    <text evidence="1">Anchors the catalytic components of the fumarate reductase complex to the cell membrane, binds quinones.</text>
</comment>
<comment type="subunit">
    <text evidence="1">Part of an enzyme complex containing four subunits: a flavoprotein (FrdA), an iron-sulfur protein (FrdB), and two hydrophobic anchor proteins (FrdC and FrdD).</text>
</comment>
<comment type="subcellular location">
    <subcellularLocation>
        <location evidence="1">Cell inner membrane</location>
        <topology evidence="1">Multi-pass membrane protein</topology>
    </subcellularLocation>
</comment>
<comment type="similarity">
    <text evidence="1">Belongs to the FrdC family.</text>
</comment>
<organism>
    <name type="scientific">Vibrio cholerae serotype O1 (strain ATCC 39541 / Classical Ogawa 395 / O395)</name>
    <dbReference type="NCBI Taxonomy" id="345073"/>
    <lineage>
        <taxon>Bacteria</taxon>
        <taxon>Pseudomonadati</taxon>
        <taxon>Pseudomonadota</taxon>
        <taxon>Gammaproteobacteria</taxon>
        <taxon>Vibrionales</taxon>
        <taxon>Vibrionaceae</taxon>
        <taxon>Vibrio</taxon>
    </lineage>
</organism>
<name>FRDC_VIBC3</name>
<protein>
    <recommendedName>
        <fullName evidence="1">Fumarate reductase subunit C</fullName>
    </recommendedName>
    <alternativeName>
        <fullName evidence="1">Quinol-fumarate reductase subunit C</fullName>
        <shortName evidence="1">QFR subunit C</shortName>
    </alternativeName>
</protein>
<sequence length="127" mass="14522">MSNRKPYVREMKRTWWKDHPFYRFYMVREATVLPLILFTLFLTVGLGSLVKGPEAWQTWLDFMANPLVIAINLVALAGSLFHAQTFFSMMPQVVPIRLGGKLVDKKIIVLAQWAAVAFISLIVLIVV</sequence>
<proteinExistence type="inferred from homology"/>
<evidence type="ECO:0000255" key="1">
    <source>
        <dbReference type="HAMAP-Rule" id="MF_00708"/>
    </source>
</evidence>
<keyword id="KW-0997">Cell inner membrane</keyword>
<keyword id="KW-1003">Cell membrane</keyword>
<keyword id="KW-0472">Membrane</keyword>
<keyword id="KW-0812">Transmembrane</keyword>
<keyword id="KW-1133">Transmembrane helix</keyword>
<feature type="chain" id="PRO_1000072764" description="Fumarate reductase subunit C">
    <location>
        <begin position="1"/>
        <end position="127"/>
    </location>
</feature>
<feature type="transmembrane region" description="Helical" evidence="1">
    <location>
        <begin position="30"/>
        <end position="50"/>
    </location>
</feature>
<feature type="transmembrane region" description="Helical" evidence="1">
    <location>
        <begin position="67"/>
        <end position="87"/>
    </location>
</feature>
<feature type="transmembrane region" description="Helical" evidence="1">
    <location>
        <begin position="107"/>
        <end position="127"/>
    </location>
</feature>
<accession>A5F4Z1</accession>
<accession>C3LXQ6</accession>
<reference key="1">
    <citation type="submission" date="2007-03" db="EMBL/GenBank/DDBJ databases">
        <authorList>
            <person name="Heidelberg J."/>
        </authorList>
    </citation>
    <scope>NUCLEOTIDE SEQUENCE [LARGE SCALE GENOMIC DNA]</scope>
    <source>
        <strain>ATCC 39541 / Classical Ogawa 395 / O395</strain>
    </source>
</reference>
<reference key="2">
    <citation type="journal article" date="2008" name="PLoS ONE">
        <title>A recalibrated molecular clock and independent origins for the cholera pandemic clones.</title>
        <authorList>
            <person name="Feng L."/>
            <person name="Reeves P.R."/>
            <person name="Lan R."/>
            <person name="Ren Y."/>
            <person name="Gao C."/>
            <person name="Zhou Z."/>
            <person name="Ren Y."/>
            <person name="Cheng J."/>
            <person name="Wang W."/>
            <person name="Wang J."/>
            <person name="Qian W."/>
            <person name="Li D."/>
            <person name="Wang L."/>
        </authorList>
    </citation>
    <scope>NUCLEOTIDE SEQUENCE [LARGE SCALE GENOMIC DNA]</scope>
    <source>
        <strain>ATCC 39541 / Classical Ogawa 395 / O395</strain>
    </source>
</reference>
<dbReference type="EMBL" id="CP000627">
    <property type="protein sequence ID" value="ABQ21234.1"/>
    <property type="molecule type" value="Genomic_DNA"/>
</dbReference>
<dbReference type="EMBL" id="CP001235">
    <property type="protein sequence ID" value="ACP10756.1"/>
    <property type="molecule type" value="Genomic_DNA"/>
</dbReference>
<dbReference type="RefSeq" id="WP_000071094.1">
    <property type="nucleotide sequence ID" value="NZ_JAACZH010000007.1"/>
</dbReference>
<dbReference type="SMR" id="A5F4Z1"/>
<dbReference type="GeneID" id="88785213"/>
<dbReference type="KEGG" id="vco:VC0395_A2232"/>
<dbReference type="KEGG" id="vcr:VC395_2771"/>
<dbReference type="PATRIC" id="fig|345073.21.peg.2669"/>
<dbReference type="eggNOG" id="COG3029">
    <property type="taxonomic scope" value="Bacteria"/>
</dbReference>
<dbReference type="HOGENOM" id="CLU_156492_0_0_6"/>
<dbReference type="OrthoDB" id="8909678at2"/>
<dbReference type="Proteomes" id="UP000000249">
    <property type="component" value="Chromosome 2"/>
</dbReference>
<dbReference type="GO" id="GO:0045283">
    <property type="term" value="C:fumarate reductase complex"/>
    <property type="evidence" value="ECO:0007669"/>
    <property type="project" value="UniProtKB-UniRule"/>
</dbReference>
<dbReference type="GO" id="GO:0005886">
    <property type="term" value="C:plasma membrane"/>
    <property type="evidence" value="ECO:0007669"/>
    <property type="project" value="UniProtKB-SubCell"/>
</dbReference>
<dbReference type="GO" id="GO:0000104">
    <property type="term" value="F:succinate dehydrogenase activity"/>
    <property type="evidence" value="ECO:0007669"/>
    <property type="project" value="UniProtKB-UniRule"/>
</dbReference>
<dbReference type="CDD" id="cd00546">
    <property type="entry name" value="QFR_TypeD_subunitC"/>
    <property type="match status" value="1"/>
</dbReference>
<dbReference type="FunFam" id="1.20.1300.10:FF:000018">
    <property type="entry name" value="Fumarate reductase subunit C"/>
    <property type="match status" value="1"/>
</dbReference>
<dbReference type="Gene3D" id="1.20.1300.10">
    <property type="entry name" value="Fumarate reductase/succinate dehydrogenase, transmembrane subunit"/>
    <property type="match status" value="1"/>
</dbReference>
<dbReference type="HAMAP" id="MF_00708">
    <property type="entry name" value="Fumarate_red_C"/>
    <property type="match status" value="1"/>
</dbReference>
<dbReference type="InterPro" id="IPR003510">
    <property type="entry name" value="Fumarate_red_C"/>
</dbReference>
<dbReference type="InterPro" id="IPR034804">
    <property type="entry name" value="SQR/QFR_C/D"/>
</dbReference>
<dbReference type="NCBIfam" id="NF003445">
    <property type="entry name" value="PRK04987.1"/>
    <property type="match status" value="1"/>
</dbReference>
<dbReference type="Pfam" id="PF02300">
    <property type="entry name" value="Fumarate_red_C"/>
    <property type="match status" value="1"/>
</dbReference>
<dbReference type="PIRSF" id="PIRSF000180">
    <property type="entry name" value="FrdC"/>
    <property type="match status" value="1"/>
</dbReference>
<dbReference type="SUPFAM" id="SSF81343">
    <property type="entry name" value="Fumarate reductase respiratory complex transmembrane subunits"/>
    <property type="match status" value="1"/>
</dbReference>
<gene>
    <name evidence="1" type="primary">frdC</name>
    <name type="ordered locus">VC0395_A2232</name>
    <name type="ordered locus">VC395_2771</name>
</gene>